<dbReference type="EC" id="6.1.1.19"/>
<dbReference type="EMBL" id="BA000004">
    <property type="protein sequence ID" value="BAB07527.1"/>
    <property type="molecule type" value="Genomic_DNA"/>
</dbReference>
<dbReference type="PIR" id="H84125">
    <property type="entry name" value="H84125"/>
</dbReference>
<dbReference type="RefSeq" id="WP_010899933.1">
    <property type="nucleotide sequence ID" value="NC_002570.2"/>
</dbReference>
<dbReference type="SMR" id="Q9K6C1"/>
<dbReference type="STRING" id="272558.gene:10729721"/>
<dbReference type="KEGG" id="bha:BH3808"/>
<dbReference type="eggNOG" id="COG0018">
    <property type="taxonomic scope" value="Bacteria"/>
</dbReference>
<dbReference type="HOGENOM" id="CLU_006406_0_1_9"/>
<dbReference type="OrthoDB" id="9805987at2"/>
<dbReference type="Proteomes" id="UP000001258">
    <property type="component" value="Chromosome"/>
</dbReference>
<dbReference type="GO" id="GO:0005737">
    <property type="term" value="C:cytoplasm"/>
    <property type="evidence" value="ECO:0007669"/>
    <property type="project" value="UniProtKB-SubCell"/>
</dbReference>
<dbReference type="GO" id="GO:0004814">
    <property type="term" value="F:arginine-tRNA ligase activity"/>
    <property type="evidence" value="ECO:0007669"/>
    <property type="project" value="UniProtKB-UniRule"/>
</dbReference>
<dbReference type="GO" id="GO:0005524">
    <property type="term" value="F:ATP binding"/>
    <property type="evidence" value="ECO:0007669"/>
    <property type="project" value="UniProtKB-UniRule"/>
</dbReference>
<dbReference type="GO" id="GO:0006420">
    <property type="term" value="P:arginyl-tRNA aminoacylation"/>
    <property type="evidence" value="ECO:0007669"/>
    <property type="project" value="UniProtKB-UniRule"/>
</dbReference>
<dbReference type="CDD" id="cd07956">
    <property type="entry name" value="Anticodon_Ia_Arg"/>
    <property type="match status" value="1"/>
</dbReference>
<dbReference type="CDD" id="cd00671">
    <property type="entry name" value="ArgRS_core"/>
    <property type="match status" value="1"/>
</dbReference>
<dbReference type="FunFam" id="1.10.730.10:FF:000008">
    <property type="entry name" value="Arginine--tRNA ligase"/>
    <property type="match status" value="1"/>
</dbReference>
<dbReference type="FunFam" id="3.30.1360.70:FF:000003">
    <property type="entry name" value="Arginine--tRNA ligase"/>
    <property type="match status" value="1"/>
</dbReference>
<dbReference type="FunFam" id="3.40.50.620:FF:000062">
    <property type="entry name" value="Arginine--tRNA ligase"/>
    <property type="match status" value="1"/>
</dbReference>
<dbReference type="Gene3D" id="3.30.1360.70">
    <property type="entry name" value="Arginyl tRNA synthetase N-terminal domain"/>
    <property type="match status" value="1"/>
</dbReference>
<dbReference type="Gene3D" id="3.40.50.620">
    <property type="entry name" value="HUPs"/>
    <property type="match status" value="1"/>
</dbReference>
<dbReference type="Gene3D" id="1.10.730.10">
    <property type="entry name" value="Isoleucyl-tRNA Synthetase, Domain 1"/>
    <property type="match status" value="1"/>
</dbReference>
<dbReference type="HAMAP" id="MF_00123">
    <property type="entry name" value="Arg_tRNA_synth"/>
    <property type="match status" value="1"/>
</dbReference>
<dbReference type="InterPro" id="IPR001412">
    <property type="entry name" value="aa-tRNA-synth_I_CS"/>
</dbReference>
<dbReference type="InterPro" id="IPR001278">
    <property type="entry name" value="Arg-tRNA-ligase"/>
</dbReference>
<dbReference type="InterPro" id="IPR005148">
    <property type="entry name" value="Arg-tRNA-synth_N"/>
</dbReference>
<dbReference type="InterPro" id="IPR036695">
    <property type="entry name" value="Arg-tRNA-synth_N_sf"/>
</dbReference>
<dbReference type="InterPro" id="IPR035684">
    <property type="entry name" value="ArgRS_core"/>
</dbReference>
<dbReference type="InterPro" id="IPR008909">
    <property type="entry name" value="DALR_anticod-bd"/>
</dbReference>
<dbReference type="InterPro" id="IPR014729">
    <property type="entry name" value="Rossmann-like_a/b/a_fold"/>
</dbReference>
<dbReference type="InterPro" id="IPR009080">
    <property type="entry name" value="tRNAsynth_Ia_anticodon-bd"/>
</dbReference>
<dbReference type="NCBIfam" id="TIGR00456">
    <property type="entry name" value="argS"/>
    <property type="match status" value="1"/>
</dbReference>
<dbReference type="PANTHER" id="PTHR11956:SF5">
    <property type="entry name" value="ARGININE--TRNA LIGASE, CYTOPLASMIC"/>
    <property type="match status" value="1"/>
</dbReference>
<dbReference type="PANTHER" id="PTHR11956">
    <property type="entry name" value="ARGINYL-TRNA SYNTHETASE"/>
    <property type="match status" value="1"/>
</dbReference>
<dbReference type="Pfam" id="PF03485">
    <property type="entry name" value="Arg_tRNA_synt_N"/>
    <property type="match status" value="1"/>
</dbReference>
<dbReference type="Pfam" id="PF05746">
    <property type="entry name" value="DALR_1"/>
    <property type="match status" value="1"/>
</dbReference>
<dbReference type="Pfam" id="PF00750">
    <property type="entry name" value="tRNA-synt_1d"/>
    <property type="match status" value="1"/>
</dbReference>
<dbReference type="PRINTS" id="PR01038">
    <property type="entry name" value="TRNASYNTHARG"/>
</dbReference>
<dbReference type="SMART" id="SM01016">
    <property type="entry name" value="Arg_tRNA_synt_N"/>
    <property type="match status" value="1"/>
</dbReference>
<dbReference type="SMART" id="SM00836">
    <property type="entry name" value="DALR_1"/>
    <property type="match status" value="1"/>
</dbReference>
<dbReference type="SUPFAM" id="SSF47323">
    <property type="entry name" value="Anticodon-binding domain of a subclass of class I aminoacyl-tRNA synthetases"/>
    <property type="match status" value="1"/>
</dbReference>
<dbReference type="SUPFAM" id="SSF55190">
    <property type="entry name" value="Arginyl-tRNA synthetase (ArgRS), N-terminal 'additional' domain"/>
    <property type="match status" value="1"/>
</dbReference>
<dbReference type="SUPFAM" id="SSF52374">
    <property type="entry name" value="Nucleotidylyl transferase"/>
    <property type="match status" value="1"/>
</dbReference>
<dbReference type="PROSITE" id="PS00178">
    <property type="entry name" value="AA_TRNA_LIGASE_I"/>
    <property type="match status" value="1"/>
</dbReference>
<organism>
    <name type="scientific">Halalkalibacterium halodurans (strain ATCC BAA-125 / DSM 18197 / FERM 7344 / JCM 9153 / C-125)</name>
    <name type="common">Bacillus halodurans</name>
    <dbReference type="NCBI Taxonomy" id="272558"/>
    <lineage>
        <taxon>Bacteria</taxon>
        <taxon>Bacillati</taxon>
        <taxon>Bacillota</taxon>
        <taxon>Bacilli</taxon>
        <taxon>Bacillales</taxon>
        <taxon>Bacillaceae</taxon>
        <taxon>Halalkalibacterium (ex Joshi et al. 2022)</taxon>
    </lineage>
</organism>
<evidence type="ECO:0000250" key="1"/>
<evidence type="ECO:0000305" key="2"/>
<protein>
    <recommendedName>
        <fullName>Arginine--tRNA ligase 1</fullName>
        <ecNumber>6.1.1.19</ecNumber>
    </recommendedName>
    <alternativeName>
        <fullName>Arginyl-tRNA synthetase 1</fullName>
        <shortName>ArgRS 1</shortName>
    </alternativeName>
</protein>
<proteinExistence type="inferred from homology"/>
<keyword id="KW-0030">Aminoacyl-tRNA synthetase</keyword>
<keyword id="KW-0067">ATP-binding</keyword>
<keyword id="KW-0963">Cytoplasm</keyword>
<keyword id="KW-0436">Ligase</keyword>
<keyword id="KW-0547">Nucleotide-binding</keyword>
<keyword id="KW-0648">Protein biosynthesis</keyword>
<keyword id="KW-1185">Reference proteome</keyword>
<accession>Q9K6C1</accession>
<gene>
    <name type="primary">argS1</name>
    <name type="ordered locus">BH3808</name>
</gene>
<name>SYR1_HALH5</name>
<sequence length="556" mass="62870">MNKMEQMKQQLREEIVVAVKAAGLATDETIPEVILETPKEKAHGDFATNMAMQLARVAKKAPRLIAEELTAKLDRKRAAIEKIEIAGPGFINFFLDNSYLREMIPTVLRAESAYGETNVGKGKKVQVEFVSANPTGNLHLGHARGAAVGDALCNILAKAGYDVSREYYINDAGNQINNLALSLEARYFQALGMEKDMPEDGYHGEDIIQFGKDLAETHGDKFVHESSEERLAFFREYGLKRELEKIKSDLEEFRVPFDNWYSETSLYTTGKVEKTLNVLKEKGKTYEQDGALWFRSTEYGDDKDRVLVKNDGSYTYLTPDISYHEDKFLRGFEKLINIWGADHHGYIPRMKAAIQALGYEKDQLDVQIIQMVSLFQNGEKVKMSKRTGKAVTLRDLMEEVGIDATRYFFAMRSADSHLDFDMDLAVSKSNENPVYYVQYAHARVCSMLRKGKELGLSFDESTDLSPIASEKEYDLLKKIGEFPEVVAEAAQKQMPHRITNYVHELASTLHSFYNAEQVINPENDEQSKARLALMKATQVTLKNALSLVGVEAPERM</sequence>
<feature type="chain" id="PRO_0000151528" description="Arginine--tRNA ligase 1">
    <location>
        <begin position="1"/>
        <end position="556"/>
    </location>
</feature>
<feature type="short sequence motif" description="'HIGH' region">
    <location>
        <begin position="132"/>
        <end position="142"/>
    </location>
</feature>
<comment type="catalytic activity">
    <reaction>
        <text>tRNA(Arg) + L-arginine + ATP = L-arginyl-tRNA(Arg) + AMP + diphosphate</text>
        <dbReference type="Rhea" id="RHEA:20301"/>
        <dbReference type="Rhea" id="RHEA-COMP:9658"/>
        <dbReference type="Rhea" id="RHEA-COMP:9673"/>
        <dbReference type="ChEBI" id="CHEBI:30616"/>
        <dbReference type="ChEBI" id="CHEBI:32682"/>
        <dbReference type="ChEBI" id="CHEBI:33019"/>
        <dbReference type="ChEBI" id="CHEBI:78442"/>
        <dbReference type="ChEBI" id="CHEBI:78513"/>
        <dbReference type="ChEBI" id="CHEBI:456215"/>
        <dbReference type="EC" id="6.1.1.19"/>
    </reaction>
</comment>
<comment type="subunit">
    <text evidence="1">Monomer.</text>
</comment>
<comment type="subcellular location">
    <subcellularLocation>
        <location evidence="1">Cytoplasm</location>
    </subcellularLocation>
</comment>
<comment type="similarity">
    <text evidence="2">Belongs to the class-I aminoacyl-tRNA synthetase family.</text>
</comment>
<reference key="1">
    <citation type="journal article" date="2000" name="Nucleic Acids Res.">
        <title>Complete genome sequence of the alkaliphilic bacterium Bacillus halodurans and genomic sequence comparison with Bacillus subtilis.</title>
        <authorList>
            <person name="Takami H."/>
            <person name="Nakasone K."/>
            <person name="Takaki Y."/>
            <person name="Maeno G."/>
            <person name="Sasaki R."/>
            <person name="Masui N."/>
            <person name="Fuji F."/>
            <person name="Hirama C."/>
            <person name="Nakamura Y."/>
            <person name="Ogasawara N."/>
            <person name="Kuhara S."/>
            <person name="Horikoshi K."/>
        </authorList>
    </citation>
    <scope>NUCLEOTIDE SEQUENCE [LARGE SCALE GENOMIC DNA]</scope>
    <source>
        <strain>ATCC BAA-125 / DSM 18197 / FERM 7344 / JCM 9153 / C-125</strain>
    </source>
</reference>